<evidence type="ECO:0000255" key="1">
    <source>
        <dbReference type="HAMAP-Rule" id="MF_00073"/>
    </source>
</evidence>
<evidence type="ECO:0000256" key="2">
    <source>
        <dbReference type="SAM" id="MobiDB-lite"/>
    </source>
</evidence>
<evidence type="ECO:0000305" key="3"/>
<gene>
    <name evidence="1" type="primary">nusB</name>
    <name type="ordered locus">Atu1172</name>
    <name type="ORF">AGR_C_2167</name>
</gene>
<feature type="chain" id="PRO_0000176502" description="Transcription antitermination protein NusB">
    <location>
        <begin position="1"/>
        <end position="165"/>
    </location>
</feature>
<feature type="region of interest" description="Disordered" evidence="2">
    <location>
        <begin position="1"/>
        <end position="20"/>
    </location>
</feature>
<organism>
    <name type="scientific">Agrobacterium fabrum (strain C58 / ATCC 33970)</name>
    <name type="common">Agrobacterium tumefaciens (strain C58)</name>
    <dbReference type="NCBI Taxonomy" id="176299"/>
    <lineage>
        <taxon>Bacteria</taxon>
        <taxon>Pseudomonadati</taxon>
        <taxon>Pseudomonadota</taxon>
        <taxon>Alphaproteobacteria</taxon>
        <taxon>Hyphomicrobiales</taxon>
        <taxon>Rhizobiaceae</taxon>
        <taxon>Rhizobium/Agrobacterium group</taxon>
        <taxon>Agrobacterium</taxon>
        <taxon>Agrobacterium tumefaciens complex</taxon>
    </lineage>
</organism>
<sequence length="165" mass="18284">MSDVENGGEPRQPSVKPANQRGAARLAAVQALYQMDVGGTGVMEVVAEYEAHRLGQEVDGDTYLKADPSWFRSIVSGVVRDQTKIDPLVRSALLEDWPLSRLDATVRAILRAGTFEILERKDVPVAVIVTEYVEIARAFFEHDEPKLVNAVLDRIAKQVRGEAKR</sequence>
<comment type="function">
    <text evidence="1">Involved in transcription antitermination. Required for transcription of ribosomal RNA (rRNA) genes. Binds specifically to the boxA antiterminator sequence of the ribosomal RNA (rrn) operons.</text>
</comment>
<comment type="similarity">
    <text evidence="1 3">Belongs to the NusB family.</text>
</comment>
<name>NUSB_AGRFC</name>
<reference key="1">
    <citation type="journal article" date="2001" name="Science">
        <title>The genome of the natural genetic engineer Agrobacterium tumefaciens C58.</title>
        <authorList>
            <person name="Wood D.W."/>
            <person name="Setubal J.C."/>
            <person name="Kaul R."/>
            <person name="Monks D.E."/>
            <person name="Kitajima J.P."/>
            <person name="Okura V.K."/>
            <person name="Zhou Y."/>
            <person name="Chen L."/>
            <person name="Wood G.E."/>
            <person name="Almeida N.F. Jr."/>
            <person name="Woo L."/>
            <person name="Chen Y."/>
            <person name="Paulsen I.T."/>
            <person name="Eisen J.A."/>
            <person name="Karp P.D."/>
            <person name="Bovee D. Sr."/>
            <person name="Chapman P."/>
            <person name="Clendenning J."/>
            <person name="Deatherage G."/>
            <person name="Gillet W."/>
            <person name="Grant C."/>
            <person name="Kutyavin T."/>
            <person name="Levy R."/>
            <person name="Li M.-J."/>
            <person name="McClelland E."/>
            <person name="Palmieri A."/>
            <person name="Raymond C."/>
            <person name="Rouse G."/>
            <person name="Saenphimmachak C."/>
            <person name="Wu Z."/>
            <person name="Romero P."/>
            <person name="Gordon D."/>
            <person name="Zhang S."/>
            <person name="Yoo H."/>
            <person name="Tao Y."/>
            <person name="Biddle P."/>
            <person name="Jung M."/>
            <person name="Krespan W."/>
            <person name="Perry M."/>
            <person name="Gordon-Kamm B."/>
            <person name="Liao L."/>
            <person name="Kim S."/>
            <person name="Hendrick C."/>
            <person name="Zhao Z.-Y."/>
            <person name="Dolan M."/>
            <person name="Chumley F."/>
            <person name="Tingey S.V."/>
            <person name="Tomb J.-F."/>
            <person name="Gordon M.P."/>
            <person name="Olson M.V."/>
            <person name="Nester E.W."/>
        </authorList>
    </citation>
    <scope>NUCLEOTIDE SEQUENCE [LARGE SCALE GENOMIC DNA]</scope>
    <source>
        <strain>C58 / ATCC 33970</strain>
    </source>
</reference>
<reference key="2">
    <citation type="journal article" date="2001" name="Science">
        <title>Genome sequence of the plant pathogen and biotechnology agent Agrobacterium tumefaciens C58.</title>
        <authorList>
            <person name="Goodner B."/>
            <person name="Hinkle G."/>
            <person name="Gattung S."/>
            <person name="Miller N."/>
            <person name="Blanchard M."/>
            <person name="Qurollo B."/>
            <person name="Goldman B.S."/>
            <person name="Cao Y."/>
            <person name="Askenazi M."/>
            <person name="Halling C."/>
            <person name="Mullin L."/>
            <person name="Houmiel K."/>
            <person name="Gordon J."/>
            <person name="Vaudin M."/>
            <person name="Iartchouk O."/>
            <person name="Epp A."/>
            <person name="Liu F."/>
            <person name="Wollam C."/>
            <person name="Allinger M."/>
            <person name="Doughty D."/>
            <person name="Scott C."/>
            <person name="Lappas C."/>
            <person name="Markelz B."/>
            <person name="Flanagan C."/>
            <person name="Crowell C."/>
            <person name="Gurson J."/>
            <person name="Lomo C."/>
            <person name="Sear C."/>
            <person name="Strub G."/>
            <person name="Cielo C."/>
            <person name="Slater S."/>
        </authorList>
    </citation>
    <scope>NUCLEOTIDE SEQUENCE [LARGE SCALE GENOMIC DNA]</scope>
    <source>
        <strain>C58 / ATCC 33970</strain>
    </source>
</reference>
<protein>
    <recommendedName>
        <fullName evidence="1">Transcription antitermination protein NusB</fullName>
    </recommendedName>
    <alternativeName>
        <fullName evidence="1">Antitermination factor NusB</fullName>
    </alternativeName>
</protein>
<dbReference type="EMBL" id="AE007869">
    <property type="protein sequence ID" value="AAK86975.2"/>
    <property type="molecule type" value="Genomic_DNA"/>
</dbReference>
<dbReference type="PIR" id="AB2721">
    <property type="entry name" value="AB2721"/>
</dbReference>
<dbReference type="PIR" id="F97502">
    <property type="entry name" value="F97502"/>
</dbReference>
<dbReference type="RefSeq" id="NP_354190.2">
    <property type="nucleotide sequence ID" value="NC_003062.2"/>
</dbReference>
<dbReference type="RefSeq" id="WP_010971444.1">
    <property type="nucleotide sequence ID" value="NC_003062.2"/>
</dbReference>
<dbReference type="SMR" id="Q8UG69"/>
<dbReference type="STRING" id="176299.Atu1172"/>
<dbReference type="EnsemblBacteria" id="AAK86975">
    <property type="protein sequence ID" value="AAK86975"/>
    <property type="gene ID" value="Atu1172"/>
</dbReference>
<dbReference type="GeneID" id="79863878"/>
<dbReference type="KEGG" id="atu:Atu1172"/>
<dbReference type="PATRIC" id="fig|176299.10.peg.1192"/>
<dbReference type="eggNOG" id="COG0781">
    <property type="taxonomic scope" value="Bacteria"/>
</dbReference>
<dbReference type="HOGENOM" id="CLU_087843_4_0_5"/>
<dbReference type="OrthoDB" id="9797817at2"/>
<dbReference type="PhylomeDB" id="Q8UG69"/>
<dbReference type="BioCyc" id="AGRO:ATU1172-MONOMER"/>
<dbReference type="Proteomes" id="UP000000813">
    <property type="component" value="Chromosome circular"/>
</dbReference>
<dbReference type="GO" id="GO:0005829">
    <property type="term" value="C:cytosol"/>
    <property type="evidence" value="ECO:0007669"/>
    <property type="project" value="TreeGrafter"/>
</dbReference>
<dbReference type="GO" id="GO:0003723">
    <property type="term" value="F:RNA binding"/>
    <property type="evidence" value="ECO:0007669"/>
    <property type="project" value="UniProtKB-UniRule"/>
</dbReference>
<dbReference type="GO" id="GO:0006353">
    <property type="term" value="P:DNA-templated transcription termination"/>
    <property type="evidence" value="ECO:0007669"/>
    <property type="project" value="UniProtKB-UniRule"/>
</dbReference>
<dbReference type="GO" id="GO:0031564">
    <property type="term" value="P:transcription antitermination"/>
    <property type="evidence" value="ECO:0007669"/>
    <property type="project" value="UniProtKB-KW"/>
</dbReference>
<dbReference type="Gene3D" id="1.10.940.10">
    <property type="entry name" value="NusB-like"/>
    <property type="match status" value="1"/>
</dbReference>
<dbReference type="HAMAP" id="MF_00073">
    <property type="entry name" value="NusB"/>
    <property type="match status" value="1"/>
</dbReference>
<dbReference type="InterPro" id="IPR035926">
    <property type="entry name" value="NusB-like_sf"/>
</dbReference>
<dbReference type="InterPro" id="IPR011605">
    <property type="entry name" value="NusB_fam"/>
</dbReference>
<dbReference type="InterPro" id="IPR006027">
    <property type="entry name" value="NusB_RsmB_TIM44"/>
</dbReference>
<dbReference type="NCBIfam" id="TIGR01951">
    <property type="entry name" value="nusB"/>
    <property type="match status" value="1"/>
</dbReference>
<dbReference type="PANTHER" id="PTHR11078:SF3">
    <property type="entry name" value="ANTITERMINATION NUSB DOMAIN-CONTAINING PROTEIN"/>
    <property type="match status" value="1"/>
</dbReference>
<dbReference type="PANTHER" id="PTHR11078">
    <property type="entry name" value="N UTILIZATION SUBSTANCE PROTEIN B-RELATED"/>
    <property type="match status" value="1"/>
</dbReference>
<dbReference type="Pfam" id="PF01029">
    <property type="entry name" value="NusB"/>
    <property type="match status" value="1"/>
</dbReference>
<dbReference type="SUPFAM" id="SSF48013">
    <property type="entry name" value="NusB-like"/>
    <property type="match status" value="1"/>
</dbReference>
<proteinExistence type="inferred from homology"/>
<keyword id="KW-1185">Reference proteome</keyword>
<keyword id="KW-0694">RNA-binding</keyword>
<keyword id="KW-0804">Transcription</keyword>
<keyword id="KW-0889">Transcription antitermination</keyword>
<keyword id="KW-0805">Transcription regulation</keyword>
<accession>Q8UG69</accession>